<proteinExistence type="inferred from homology"/>
<comment type="catalytic activity">
    <reaction>
        <text>a 1,2-diacyl-sn-glycero-3-phosphate + CTP + H(+) = a CDP-1,2-diacyl-sn-glycerol + diphosphate</text>
        <dbReference type="Rhea" id="RHEA:16229"/>
        <dbReference type="ChEBI" id="CHEBI:15378"/>
        <dbReference type="ChEBI" id="CHEBI:33019"/>
        <dbReference type="ChEBI" id="CHEBI:37563"/>
        <dbReference type="ChEBI" id="CHEBI:58332"/>
        <dbReference type="ChEBI" id="CHEBI:58608"/>
        <dbReference type="EC" id="2.7.7.41"/>
    </reaction>
</comment>
<comment type="pathway">
    <text>Phospholipid metabolism; CDP-diacylglycerol biosynthesis; CDP-diacylglycerol from sn-glycerol 3-phosphate: step 3/3.</text>
</comment>
<comment type="subcellular location">
    <subcellularLocation>
        <location evidence="1">Cell membrane</location>
        <topology evidence="1">Multi-pass membrane protein</topology>
    </subcellularLocation>
</comment>
<comment type="similarity">
    <text evidence="3">Belongs to the CDS family.</text>
</comment>
<reference key="1">
    <citation type="journal article" date="2001" name="Lancet">
        <title>Whole genome sequencing of meticillin-resistant Staphylococcus aureus.</title>
        <authorList>
            <person name="Kuroda M."/>
            <person name="Ohta T."/>
            <person name="Uchiyama I."/>
            <person name="Baba T."/>
            <person name="Yuzawa H."/>
            <person name="Kobayashi I."/>
            <person name="Cui L."/>
            <person name="Oguchi A."/>
            <person name="Aoki K."/>
            <person name="Nagai Y."/>
            <person name="Lian J.-Q."/>
            <person name="Ito T."/>
            <person name="Kanamori M."/>
            <person name="Matsumaru H."/>
            <person name="Maruyama A."/>
            <person name="Murakami H."/>
            <person name="Hosoyama A."/>
            <person name="Mizutani-Ui Y."/>
            <person name="Takahashi N.K."/>
            <person name="Sawano T."/>
            <person name="Inoue R."/>
            <person name="Kaito C."/>
            <person name="Sekimizu K."/>
            <person name="Hirakawa H."/>
            <person name="Kuhara S."/>
            <person name="Goto S."/>
            <person name="Yabuzaki J."/>
            <person name="Kanehisa M."/>
            <person name="Yamashita A."/>
            <person name="Oshima K."/>
            <person name="Furuya K."/>
            <person name="Yoshino C."/>
            <person name="Shiba T."/>
            <person name="Hattori M."/>
            <person name="Ogasawara N."/>
            <person name="Hayashi H."/>
            <person name="Hiramatsu K."/>
        </authorList>
    </citation>
    <scope>NUCLEOTIDE SEQUENCE [LARGE SCALE GENOMIC DNA]</scope>
    <source>
        <strain>Mu50 / ATCC 700699</strain>
    </source>
</reference>
<protein>
    <recommendedName>
        <fullName>Phosphatidate cytidylyltransferase</fullName>
        <ecNumber>2.7.7.41</ecNumber>
    </recommendedName>
    <alternativeName>
        <fullName>CDP-DAG synthase</fullName>
    </alternativeName>
    <alternativeName>
        <fullName>CDP-DG synthase</fullName>
    </alternativeName>
    <alternativeName>
        <fullName>CDP-diacylglycerol synthase</fullName>
        <shortName>CDS</shortName>
    </alternativeName>
    <alternativeName>
        <fullName>CDP-diglyceride pyrophosphorylase</fullName>
    </alternativeName>
    <alternativeName>
        <fullName>CDP-diglyceride synthase</fullName>
    </alternativeName>
    <alternativeName>
        <fullName>CTP:phosphatidate cytidylyltransferase</fullName>
    </alternativeName>
</protein>
<keyword id="KW-1003">Cell membrane</keyword>
<keyword id="KW-0444">Lipid biosynthesis</keyword>
<keyword id="KW-0443">Lipid metabolism</keyword>
<keyword id="KW-0472">Membrane</keyword>
<keyword id="KW-0548">Nucleotidyltransferase</keyword>
<keyword id="KW-0594">Phospholipid biosynthesis</keyword>
<keyword id="KW-1208">Phospholipid metabolism</keyword>
<keyword id="KW-0808">Transferase</keyword>
<keyword id="KW-0812">Transmembrane</keyword>
<keyword id="KW-1133">Transmembrane helix</keyword>
<accession>Q99UL1</accession>
<dbReference type="EC" id="2.7.7.41"/>
<dbReference type="EMBL" id="BA000017">
    <property type="protein sequence ID" value="BAB57423.1"/>
    <property type="molecule type" value="Genomic_DNA"/>
</dbReference>
<dbReference type="RefSeq" id="WP_000868413.1">
    <property type="nucleotide sequence ID" value="NC_002758.2"/>
</dbReference>
<dbReference type="SMR" id="Q99UL1"/>
<dbReference type="KEGG" id="sav:SAV1261"/>
<dbReference type="HOGENOM" id="CLU_037294_2_2_9"/>
<dbReference type="PhylomeDB" id="Q99UL1"/>
<dbReference type="BioCyc" id="MetaCyc:MONOMER-20006"/>
<dbReference type="UniPathway" id="UPA00557">
    <property type="reaction ID" value="UER00614"/>
</dbReference>
<dbReference type="Proteomes" id="UP000002481">
    <property type="component" value="Chromosome"/>
</dbReference>
<dbReference type="GO" id="GO:0005886">
    <property type="term" value="C:plasma membrane"/>
    <property type="evidence" value="ECO:0007669"/>
    <property type="project" value="UniProtKB-SubCell"/>
</dbReference>
<dbReference type="GO" id="GO:0004605">
    <property type="term" value="F:phosphatidate cytidylyltransferase activity"/>
    <property type="evidence" value="ECO:0007669"/>
    <property type="project" value="UniProtKB-EC"/>
</dbReference>
<dbReference type="GO" id="GO:0016024">
    <property type="term" value="P:CDP-diacylglycerol biosynthetic process"/>
    <property type="evidence" value="ECO:0007669"/>
    <property type="project" value="UniProtKB-UniPathway"/>
</dbReference>
<dbReference type="InterPro" id="IPR000374">
    <property type="entry name" value="PC_trans"/>
</dbReference>
<dbReference type="PANTHER" id="PTHR46382">
    <property type="entry name" value="PHOSPHATIDATE CYTIDYLYLTRANSFERASE"/>
    <property type="match status" value="1"/>
</dbReference>
<dbReference type="PANTHER" id="PTHR46382:SF1">
    <property type="entry name" value="PHOSPHATIDATE CYTIDYLYLTRANSFERASE"/>
    <property type="match status" value="1"/>
</dbReference>
<dbReference type="Pfam" id="PF01148">
    <property type="entry name" value="CTP_transf_1"/>
    <property type="match status" value="1"/>
</dbReference>
<dbReference type="PROSITE" id="PS01315">
    <property type="entry name" value="CDS"/>
    <property type="match status" value="1"/>
</dbReference>
<gene>
    <name type="primary">cdsA</name>
    <name type="ordered locus">SAV1261</name>
</gene>
<feature type="chain" id="PRO_0000090748" description="Phosphatidate cytidylyltransferase">
    <location>
        <begin position="1"/>
        <end position="260"/>
    </location>
</feature>
<feature type="transmembrane region" description="Helical" evidence="2">
    <location>
        <begin position="9"/>
        <end position="29"/>
    </location>
</feature>
<feature type="transmembrane region" description="Helical" evidence="2">
    <location>
        <begin position="46"/>
        <end position="66"/>
    </location>
</feature>
<feature type="transmembrane region" description="Helical" evidence="2">
    <location>
        <begin position="70"/>
        <end position="90"/>
    </location>
</feature>
<feature type="transmembrane region" description="Helical" evidence="2">
    <location>
        <begin position="102"/>
        <end position="122"/>
    </location>
</feature>
<feature type="transmembrane region" description="Helical" evidence="2">
    <location>
        <begin position="130"/>
        <end position="150"/>
    </location>
</feature>
<feature type="transmembrane region" description="Helical" evidence="2">
    <location>
        <begin position="172"/>
        <end position="192"/>
    </location>
</feature>
<feature type="transmembrane region" description="Helical" evidence="2">
    <location>
        <begin position="196"/>
        <end position="216"/>
    </location>
</feature>
<organism>
    <name type="scientific">Staphylococcus aureus (strain Mu50 / ATCC 700699)</name>
    <dbReference type="NCBI Taxonomy" id="158878"/>
    <lineage>
        <taxon>Bacteria</taxon>
        <taxon>Bacillati</taxon>
        <taxon>Bacillota</taxon>
        <taxon>Bacilli</taxon>
        <taxon>Bacillales</taxon>
        <taxon>Staphylococcaceae</taxon>
        <taxon>Staphylococcus</taxon>
    </lineage>
</organism>
<name>CDSA_STAAM</name>
<evidence type="ECO:0000250" key="1"/>
<evidence type="ECO:0000255" key="2"/>
<evidence type="ECO:0000305" key="3"/>
<sequence length="260" mass="28964">MKVRTLTAIIALIVFLPILLKGGLVLMIFANILALIALKELLNMNMIKFVSVPGLISAVGLIIIMLPQHAGPWVQVIQLKSLIAMSFIVLSYTVLSKNRFSFMDAAFCLMSVAYVGIGFMFFYETRSEGLHYILYAFLIVWLTDTGAYLFGKMMGKHKLWPVISPNKTIEGFIGGLFCSLIVPLAMLYFVDFNMNVWILLGVTLILSLFGQLGDLVESGFKRHFGVKDSGRILPGHGGILDRFDSFMFVLPLLNILLIQS</sequence>